<sequence>MSQSNNVTDLARANIRALTPYMSARRLGGNGDVWLNANEYPLGTEYQLTTQTFNRYPECQPKHVIERYAAYAGLPPEQVLVSRGADEGIELLIRAFCEPGQDAILFCPPTYGMYAVSAETFGVERRTVPAQADWQLDLPAIANNLEQVKVIYVCSPNNPTGNLINPADLQAVLALAQGRAIVAIDEAYIEFCPQASVSNWLKDYPNLVILRTLSKAFALAGLRCGFTLANSDIIQLLLKVIAPYPLSTPVADIAAQALSPKGIEQMRQRVSEVRANRAWLQSALQDCACVEQVFTSESNYLLARFTASSSVFNALWDQGIILRDQNKQPGLANCLRITIGTRQECERVIAALAPLPGIDNSNNIDNQNKTYSQTSSIRKGTI</sequence>
<proteinExistence type="inferred from homology"/>
<name>HIS8_YERPE</name>
<gene>
    <name evidence="1" type="primary">hisC</name>
    <name type="ordered locus">YPO1547</name>
    <name type="ordered locus">y2622</name>
    <name type="ordered locus">YP_1436</name>
</gene>
<accession>Q8ZFX6</accession>
<accession>Q0WGM5</accession>
<keyword id="KW-0028">Amino-acid biosynthesis</keyword>
<keyword id="KW-0032">Aminotransferase</keyword>
<keyword id="KW-0368">Histidine biosynthesis</keyword>
<keyword id="KW-0663">Pyridoxal phosphate</keyword>
<keyword id="KW-1185">Reference proteome</keyword>
<keyword id="KW-0808">Transferase</keyword>
<feature type="chain" id="PRO_0000153487" description="Histidinol-phosphate aminotransferase">
    <location>
        <begin position="1"/>
        <end position="382"/>
    </location>
</feature>
<feature type="region of interest" description="Disordered" evidence="2">
    <location>
        <begin position="363"/>
        <end position="382"/>
    </location>
</feature>
<feature type="modified residue" description="N6-(pyridoxal phosphate)lysine" evidence="1">
    <location>
        <position position="215"/>
    </location>
</feature>
<evidence type="ECO:0000255" key="1">
    <source>
        <dbReference type="HAMAP-Rule" id="MF_01023"/>
    </source>
</evidence>
<evidence type="ECO:0000256" key="2">
    <source>
        <dbReference type="SAM" id="MobiDB-lite"/>
    </source>
</evidence>
<protein>
    <recommendedName>
        <fullName evidence="1">Histidinol-phosphate aminotransferase</fullName>
        <ecNumber evidence="1">2.6.1.9</ecNumber>
    </recommendedName>
    <alternativeName>
        <fullName evidence="1">Imidazole acetol-phosphate transaminase</fullName>
    </alternativeName>
</protein>
<reference key="1">
    <citation type="journal article" date="2001" name="Nature">
        <title>Genome sequence of Yersinia pestis, the causative agent of plague.</title>
        <authorList>
            <person name="Parkhill J."/>
            <person name="Wren B.W."/>
            <person name="Thomson N.R."/>
            <person name="Titball R.W."/>
            <person name="Holden M.T.G."/>
            <person name="Prentice M.B."/>
            <person name="Sebaihia M."/>
            <person name="James K.D."/>
            <person name="Churcher C.M."/>
            <person name="Mungall K.L."/>
            <person name="Baker S."/>
            <person name="Basham D."/>
            <person name="Bentley S.D."/>
            <person name="Brooks K."/>
            <person name="Cerdeno-Tarraga A.-M."/>
            <person name="Chillingworth T."/>
            <person name="Cronin A."/>
            <person name="Davies R.M."/>
            <person name="Davis P."/>
            <person name="Dougan G."/>
            <person name="Feltwell T."/>
            <person name="Hamlin N."/>
            <person name="Holroyd S."/>
            <person name="Jagels K."/>
            <person name="Karlyshev A.V."/>
            <person name="Leather S."/>
            <person name="Moule S."/>
            <person name="Oyston P.C.F."/>
            <person name="Quail M.A."/>
            <person name="Rutherford K.M."/>
            <person name="Simmonds M."/>
            <person name="Skelton J."/>
            <person name="Stevens K."/>
            <person name="Whitehead S."/>
            <person name="Barrell B.G."/>
        </authorList>
    </citation>
    <scope>NUCLEOTIDE SEQUENCE [LARGE SCALE GENOMIC DNA]</scope>
    <source>
        <strain>CO-92 / Biovar Orientalis</strain>
    </source>
</reference>
<reference key="2">
    <citation type="journal article" date="2002" name="J. Bacteriol.">
        <title>Genome sequence of Yersinia pestis KIM.</title>
        <authorList>
            <person name="Deng W."/>
            <person name="Burland V."/>
            <person name="Plunkett G. III"/>
            <person name="Boutin A."/>
            <person name="Mayhew G.F."/>
            <person name="Liss P."/>
            <person name="Perna N.T."/>
            <person name="Rose D.J."/>
            <person name="Mau B."/>
            <person name="Zhou S."/>
            <person name="Schwartz D.C."/>
            <person name="Fetherston J.D."/>
            <person name="Lindler L.E."/>
            <person name="Brubaker R.R."/>
            <person name="Plano G.V."/>
            <person name="Straley S.C."/>
            <person name="McDonough K.A."/>
            <person name="Nilles M.L."/>
            <person name="Matson J.S."/>
            <person name="Blattner F.R."/>
            <person name="Perry R.D."/>
        </authorList>
    </citation>
    <scope>NUCLEOTIDE SEQUENCE [LARGE SCALE GENOMIC DNA]</scope>
    <source>
        <strain>KIM10+ / Biovar Mediaevalis</strain>
    </source>
</reference>
<reference key="3">
    <citation type="journal article" date="2004" name="DNA Res.">
        <title>Complete genome sequence of Yersinia pestis strain 91001, an isolate avirulent to humans.</title>
        <authorList>
            <person name="Song Y."/>
            <person name="Tong Z."/>
            <person name="Wang J."/>
            <person name="Wang L."/>
            <person name="Guo Z."/>
            <person name="Han Y."/>
            <person name="Zhang J."/>
            <person name="Pei D."/>
            <person name="Zhou D."/>
            <person name="Qin H."/>
            <person name="Pang X."/>
            <person name="Han Y."/>
            <person name="Zhai J."/>
            <person name="Li M."/>
            <person name="Cui B."/>
            <person name="Qi Z."/>
            <person name="Jin L."/>
            <person name="Dai R."/>
            <person name="Chen F."/>
            <person name="Li S."/>
            <person name="Ye C."/>
            <person name="Du Z."/>
            <person name="Lin W."/>
            <person name="Wang J."/>
            <person name="Yu J."/>
            <person name="Yang H."/>
            <person name="Wang J."/>
            <person name="Huang P."/>
            <person name="Yang R."/>
        </authorList>
    </citation>
    <scope>NUCLEOTIDE SEQUENCE [LARGE SCALE GENOMIC DNA]</scope>
    <source>
        <strain>91001 / Biovar Mediaevalis</strain>
    </source>
</reference>
<dbReference type="EC" id="2.6.1.9" evidence="1"/>
<dbReference type="EMBL" id="AL590842">
    <property type="protein sequence ID" value="CAL20193.1"/>
    <property type="molecule type" value="Genomic_DNA"/>
</dbReference>
<dbReference type="EMBL" id="AE009952">
    <property type="protein sequence ID" value="AAM86176.1"/>
    <property type="molecule type" value="Genomic_DNA"/>
</dbReference>
<dbReference type="EMBL" id="AE017042">
    <property type="protein sequence ID" value="AAS61677.1"/>
    <property type="molecule type" value="Genomic_DNA"/>
</dbReference>
<dbReference type="PIR" id="AG0188">
    <property type="entry name" value="AG0188"/>
</dbReference>
<dbReference type="RefSeq" id="WP_002211894.1">
    <property type="nucleotide sequence ID" value="NZ_WUCM01000031.1"/>
</dbReference>
<dbReference type="RefSeq" id="YP_002346563.1">
    <property type="nucleotide sequence ID" value="NC_003143.1"/>
</dbReference>
<dbReference type="SMR" id="Q8ZFX6"/>
<dbReference type="IntAct" id="Q8ZFX6">
    <property type="interactions" value="1"/>
</dbReference>
<dbReference type="STRING" id="214092.YPO1547"/>
<dbReference type="PaxDb" id="214092-YPO1547"/>
<dbReference type="DNASU" id="1147569"/>
<dbReference type="EnsemblBacteria" id="AAS61677">
    <property type="protein sequence ID" value="AAS61677"/>
    <property type="gene ID" value="YP_1436"/>
</dbReference>
<dbReference type="GeneID" id="57977021"/>
<dbReference type="KEGG" id="ype:YPO1547"/>
<dbReference type="KEGG" id="ypk:y2622"/>
<dbReference type="KEGG" id="ypm:YP_1436"/>
<dbReference type="PATRIC" id="fig|214092.21.peg.1884"/>
<dbReference type="eggNOG" id="COG0079">
    <property type="taxonomic scope" value="Bacteria"/>
</dbReference>
<dbReference type="HOGENOM" id="CLU_017584_3_1_6"/>
<dbReference type="OMA" id="NFVQFGR"/>
<dbReference type="OrthoDB" id="9813612at2"/>
<dbReference type="UniPathway" id="UPA00031">
    <property type="reaction ID" value="UER00012"/>
</dbReference>
<dbReference type="Proteomes" id="UP000000815">
    <property type="component" value="Chromosome"/>
</dbReference>
<dbReference type="Proteomes" id="UP000001019">
    <property type="component" value="Chromosome"/>
</dbReference>
<dbReference type="Proteomes" id="UP000002490">
    <property type="component" value="Chromosome"/>
</dbReference>
<dbReference type="GO" id="GO:0004400">
    <property type="term" value="F:histidinol-phosphate transaminase activity"/>
    <property type="evidence" value="ECO:0007669"/>
    <property type="project" value="UniProtKB-UniRule"/>
</dbReference>
<dbReference type="GO" id="GO:0030170">
    <property type="term" value="F:pyridoxal phosphate binding"/>
    <property type="evidence" value="ECO:0007669"/>
    <property type="project" value="InterPro"/>
</dbReference>
<dbReference type="GO" id="GO:0000105">
    <property type="term" value="P:L-histidine biosynthetic process"/>
    <property type="evidence" value="ECO:0007669"/>
    <property type="project" value="UniProtKB-UniRule"/>
</dbReference>
<dbReference type="CDD" id="cd00609">
    <property type="entry name" value="AAT_like"/>
    <property type="match status" value="1"/>
</dbReference>
<dbReference type="Gene3D" id="3.90.1150.10">
    <property type="entry name" value="Aspartate Aminotransferase, domain 1"/>
    <property type="match status" value="1"/>
</dbReference>
<dbReference type="Gene3D" id="3.40.640.10">
    <property type="entry name" value="Type I PLP-dependent aspartate aminotransferase-like (Major domain)"/>
    <property type="match status" value="1"/>
</dbReference>
<dbReference type="HAMAP" id="MF_01023">
    <property type="entry name" value="HisC_aminotrans_2"/>
    <property type="match status" value="1"/>
</dbReference>
<dbReference type="InterPro" id="IPR001917">
    <property type="entry name" value="Aminotrans_II_pyridoxalP_BS"/>
</dbReference>
<dbReference type="InterPro" id="IPR004839">
    <property type="entry name" value="Aminotransferase_I/II_large"/>
</dbReference>
<dbReference type="InterPro" id="IPR005861">
    <property type="entry name" value="HisP_aminotrans"/>
</dbReference>
<dbReference type="InterPro" id="IPR015424">
    <property type="entry name" value="PyrdxlP-dep_Trfase"/>
</dbReference>
<dbReference type="InterPro" id="IPR015421">
    <property type="entry name" value="PyrdxlP-dep_Trfase_major"/>
</dbReference>
<dbReference type="InterPro" id="IPR015422">
    <property type="entry name" value="PyrdxlP-dep_Trfase_small"/>
</dbReference>
<dbReference type="NCBIfam" id="TIGR01141">
    <property type="entry name" value="hisC"/>
    <property type="match status" value="1"/>
</dbReference>
<dbReference type="PANTHER" id="PTHR42885:SF2">
    <property type="entry name" value="HISTIDINOL-PHOSPHATE AMINOTRANSFERASE"/>
    <property type="match status" value="1"/>
</dbReference>
<dbReference type="PANTHER" id="PTHR42885">
    <property type="entry name" value="HISTIDINOL-PHOSPHATE AMINOTRANSFERASE-RELATED"/>
    <property type="match status" value="1"/>
</dbReference>
<dbReference type="Pfam" id="PF00155">
    <property type="entry name" value="Aminotran_1_2"/>
    <property type="match status" value="1"/>
</dbReference>
<dbReference type="SUPFAM" id="SSF53383">
    <property type="entry name" value="PLP-dependent transferases"/>
    <property type="match status" value="1"/>
</dbReference>
<dbReference type="PROSITE" id="PS00599">
    <property type="entry name" value="AA_TRANSFER_CLASS_2"/>
    <property type="match status" value="1"/>
</dbReference>
<organism>
    <name type="scientific">Yersinia pestis</name>
    <dbReference type="NCBI Taxonomy" id="632"/>
    <lineage>
        <taxon>Bacteria</taxon>
        <taxon>Pseudomonadati</taxon>
        <taxon>Pseudomonadota</taxon>
        <taxon>Gammaproteobacteria</taxon>
        <taxon>Enterobacterales</taxon>
        <taxon>Yersiniaceae</taxon>
        <taxon>Yersinia</taxon>
    </lineage>
</organism>
<comment type="catalytic activity">
    <reaction evidence="1">
        <text>L-histidinol phosphate + 2-oxoglutarate = 3-(imidazol-4-yl)-2-oxopropyl phosphate + L-glutamate</text>
        <dbReference type="Rhea" id="RHEA:23744"/>
        <dbReference type="ChEBI" id="CHEBI:16810"/>
        <dbReference type="ChEBI" id="CHEBI:29985"/>
        <dbReference type="ChEBI" id="CHEBI:57766"/>
        <dbReference type="ChEBI" id="CHEBI:57980"/>
        <dbReference type="EC" id="2.6.1.9"/>
    </reaction>
</comment>
<comment type="cofactor">
    <cofactor evidence="1">
        <name>pyridoxal 5'-phosphate</name>
        <dbReference type="ChEBI" id="CHEBI:597326"/>
    </cofactor>
</comment>
<comment type="pathway">
    <text evidence="1">Amino-acid biosynthesis; L-histidine biosynthesis; L-histidine from 5-phospho-alpha-D-ribose 1-diphosphate: step 7/9.</text>
</comment>
<comment type="subunit">
    <text evidence="1">Homodimer.</text>
</comment>
<comment type="similarity">
    <text evidence="1">Belongs to the class-II pyridoxal-phosphate-dependent aminotransferase family. Histidinol-phosphate aminotransferase subfamily.</text>
</comment>